<comment type="catalytic activity">
    <reaction evidence="1">
        <text>tRNA(Lys) + L-lysine + ATP = L-lysyl-tRNA(Lys) + AMP + diphosphate</text>
        <dbReference type="Rhea" id="RHEA:20792"/>
        <dbReference type="Rhea" id="RHEA-COMP:9696"/>
        <dbReference type="Rhea" id="RHEA-COMP:9697"/>
        <dbReference type="ChEBI" id="CHEBI:30616"/>
        <dbReference type="ChEBI" id="CHEBI:32551"/>
        <dbReference type="ChEBI" id="CHEBI:33019"/>
        <dbReference type="ChEBI" id="CHEBI:78442"/>
        <dbReference type="ChEBI" id="CHEBI:78529"/>
        <dbReference type="ChEBI" id="CHEBI:456215"/>
        <dbReference type="EC" id="6.1.1.6"/>
    </reaction>
</comment>
<comment type="cofactor">
    <cofactor evidence="1">
        <name>Mg(2+)</name>
        <dbReference type="ChEBI" id="CHEBI:18420"/>
    </cofactor>
    <text evidence="1">Binds 3 Mg(2+) ions per subunit.</text>
</comment>
<comment type="subunit">
    <text evidence="1">Homodimer.</text>
</comment>
<comment type="subcellular location">
    <subcellularLocation>
        <location evidence="1">Cytoplasm</location>
    </subcellularLocation>
</comment>
<comment type="similarity">
    <text evidence="1">Belongs to the class-II aminoacyl-tRNA synthetase family.</text>
</comment>
<dbReference type="EC" id="6.1.1.6" evidence="1"/>
<dbReference type="EMBL" id="CP001047">
    <property type="protein sequence ID" value="ACF07579.1"/>
    <property type="molecule type" value="Genomic_DNA"/>
</dbReference>
<dbReference type="RefSeq" id="WP_012498536.1">
    <property type="nucleotide sequence ID" value="NC_011025.1"/>
</dbReference>
<dbReference type="SMR" id="B3PNH7"/>
<dbReference type="STRING" id="243272.MARTH_orf860"/>
<dbReference type="KEGG" id="mat:MARTH_orf860"/>
<dbReference type="eggNOG" id="COG1190">
    <property type="taxonomic scope" value="Bacteria"/>
</dbReference>
<dbReference type="HOGENOM" id="CLU_008255_6_0_14"/>
<dbReference type="Proteomes" id="UP000008812">
    <property type="component" value="Chromosome"/>
</dbReference>
<dbReference type="GO" id="GO:0005829">
    <property type="term" value="C:cytosol"/>
    <property type="evidence" value="ECO:0007669"/>
    <property type="project" value="TreeGrafter"/>
</dbReference>
<dbReference type="GO" id="GO:0005524">
    <property type="term" value="F:ATP binding"/>
    <property type="evidence" value="ECO:0007669"/>
    <property type="project" value="UniProtKB-UniRule"/>
</dbReference>
<dbReference type="GO" id="GO:0004824">
    <property type="term" value="F:lysine-tRNA ligase activity"/>
    <property type="evidence" value="ECO:0007669"/>
    <property type="project" value="UniProtKB-UniRule"/>
</dbReference>
<dbReference type="GO" id="GO:0000287">
    <property type="term" value="F:magnesium ion binding"/>
    <property type="evidence" value="ECO:0007669"/>
    <property type="project" value="UniProtKB-UniRule"/>
</dbReference>
<dbReference type="GO" id="GO:0000049">
    <property type="term" value="F:tRNA binding"/>
    <property type="evidence" value="ECO:0007669"/>
    <property type="project" value="TreeGrafter"/>
</dbReference>
<dbReference type="GO" id="GO:0006430">
    <property type="term" value="P:lysyl-tRNA aminoacylation"/>
    <property type="evidence" value="ECO:0007669"/>
    <property type="project" value="UniProtKB-UniRule"/>
</dbReference>
<dbReference type="CDD" id="cd00775">
    <property type="entry name" value="LysRS_core"/>
    <property type="match status" value="1"/>
</dbReference>
<dbReference type="CDD" id="cd04322">
    <property type="entry name" value="LysRS_N"/>
    <property type="match status" value="1"/>
</dbReference>
<dbReference type="Gene3D" id="3.30.930.10">
    <property type="entry name" value="Bira Bifunctional Protein, Domain 2"/>
    <property type="match status" value="1"/>
</dbReference>
<dbReference type="Gene3D" id="2.40.50.140">
    <property type="entry name" value="Nucleic acid-binding proteins"/>
    <property type="match status" value="1"/>
</dbReference>
<dbReference type="HAMAP" id="MF_00252">
    <property type="entry name" value="Lys_tRNA_synth_class2"/>
    <property type="match status" value="1"/>
</dbReference>
<dbReference type="InterPro" id="IPR004364">
    <property type="entry name" value="Aa-tRNA-synt_II"/>
</dbReference>
<dbReference type="InterPro" id="IPR006195">
    <property type="entry name" value="aa-tRNA-synth_II"/>
</dbReference>
<dbReference type="InterPro" id="IPR045864">
    <property type="entry name" value="aa-tRNA-synth_II/BPL/LPL"/>
</dbReference>
<dbReference type="InterPro" id="IPR002313">
    <property type="entry name" value="Lys-tRNA-ligase_II"/>
</dbReference>
<dbReference type="InterPro" id="IPR044136">
    <property type="entry name" value="Lys-tRNA-ligase_II_N"/>
</dbReference>
<dbReference type="InterPro" id="IPR018149">
    <property type="entry name" value="Lys-tRNA-synth_II_C"/>
</dbReference>
<dbReference type="InterPro" id="IPR012340">
    <property type="entry name" value="NA-bd_OB-fold"/>
</dbReference>
<dbReference type="InterPro" id="IPR004365">
    <property type="entry name" value="NA-bd_OB_tRNA"/>
</dbReference>
<dbReference type="NCBIfam" id="TIGR00499">
    <property type="entry name" value="lysS_bact"/>
    <property type="match status" value="1"/>
</dbReference>
<dbReference type="NCBIfam" id="NF001756">
    <property type="entry name" value="PRK00484.1"/>
    <property type="match status" value="1"/>
</dbReference>
<dbReference type="PANTHER" id="PTHR42918:SF15">
    <property type="entry name" value="LYSINE--TRNA LIGASE, CHLOROPLASTIC_MITOCHONDRIAL"/>
    <property type="match status" value="1"/>
</dbReference>
<dbReference type="PANTHER" id="PTHR42918">
    <property type="entry name" value="LYSYL-TRNA SYNTHETASE"/>
    <property type="match status" value="1"/>
</dbReference>
<dbReference type="Pfam" id="PF00152">
    <property type="entry name" value="tRNA-synt_2"/>
    <property type="match status" value="1"/>
</dbReference>
<dbReference type="Pfam" id="PF01336">
    <property type="entry name" value="tRNA_anti-codon"/>
    <property type="match status" value="1"/>
</dbReference>
<dbReference type="PRINTS" id="PR00982">
    <property type="entry name" value="TRNASYNTHLYS"/>
</dbReference>
<dbReference type="SUPFAM" id="SSF55681">
    <property type="entry name" value="Class II aaRS and biotin synthetases"/>
    <property type="match status" value="1"/>
</dbReference>
<dbReference type="SUPFAM" id="SSF50249">
    <property type="entry name" value="Nucleic acid-binding proteins"/>
    <property type="match status" value="1"/>
</dbReference>
<dbReference type="PROSITE" id="PS50862">
    <property type="entry name" value="AA_TRNA_LIGASE_II"/>
    <property type="match status" value="1"/>
</dbReference>
<name>SYK_META1</name>
<organism>
    <name type="scientific">Metamycoplasma arthritidis (strain 158L3-1)</name>
    <name type="common">Mycoplasma arthritidis</name>
    <dbReference type="NCBI Taxonomy" id="243272"/>
    <lineage>
        <taxon>Bacteria</taxon>
        <taxon>Bacillati</taxon>
        <taxon>Mycoplasmatota</taxon>
        <taxon>Mycoplasmoidales</taxon>
        <taxon>Metamycoplasmataceae</taxon>
        <taxon>Metamycoplasma</taxon>
    </lineage>
</organism>
<reference key="1">
    <citation type="journal article" date="2008" name="Infect. Immun.">
        <title>Genome of Mycoplasma arthritidis.</title>
        <authorList>
            <person name="Dybvig K."/>
            <person name="Zuhua C."/>
            <person name="Lao P."/>
            <person name="Jordan D.S."/>
            <person name="French C.T."/>
            <person name="Tu A.H."/>
            <person name="Loraine A.E."/>
        </authorList>
    </citation>
    <scope>NUCLEOTIDE SEQUENCE [LARGE SCALE GENOMIC DNA]</scope>
    <source>
        <strain>158L3-1</strain>
    </source>
</reference>
<feature type="chain" id="PRO_1000199243" description="Lysine--tRNA ligase">
    <location>
        <begin position="1"/>
        <end position="490"/>
    </location>
</feature>
<feature type="binding site" evidence="1">
    <location>
        <position position="398"/>
    </location>
    <ligand>
        <name>Mg(2+)</name>
        <dbReference type="ChEBI" id="CHEBI:18420"/>
        <label>1</label>
    </ligand>
</feature>
<feature type="binding site" evidence="1">
    <location>
        <position position="405"/>
    </location>
    <ligand>
        <name>Mg(2+)</name>
        <dbReference type="ChEBI" id="CHEBI:18420"/>
        <label>1</label>
    </ligand>
</feature>
<feature type="binding site" evidence="1">
    <location>
        <position position="405"/>
    </location>
    <ligand>
        <name>Mg(2+)</name>
        <dbReference type="ChEBI" id="CHEBI:18420"/>
        <label>2</label>
    </ligand>
</feature>
<evidence type="ECO:0000255" key="1">
    <source>
        <dbReference type="HAMAP-Rule" id="MF_00252"/>
    </source>
</evidence>
<accession>B3PNH7</accession>
<protein>
    <recommendedName>
        <fullName evidence="1">Lysine--tRNA ligase</fullName>
        <ecNumber evidence="1">6.1.1.6</ecNumber>
    </recommendedName>
    <alternativeName>
        <fullName evidence="1">Lysyl-tRNA synthetase</fullName>
        <shortName evidence="1">LysRS</shortName>
    </alternativeName>
</protein>
<gene>
    <name evidence="1" type="primary">lysS</name>
    <name type="ordered locus">MARTH_orf860</name>
</gene>
<sequence>MERKFSEQEQVRRDKVTALEKQNIRAFSQTIKPTHTSEEIHANFANKEREDIEKTNTIAVLNGRVIAQRGPFLVLQGRSSTLQIYVDKKALNEETLIILKQLDLGDIISATGLVSKTHTGELMIKASDIKLLTKSLIPLPDKFHGLVDREDRYRHRYVDTIVNEDVKKTFILRSKIIKLIREYFDNLNFLEVDTPVLQPILGGAAAKPFITYYNALNCNFYLRIATELPLKKLIVGGFERVYEIGRIFRNEGIDTTHNPEFTSIEFYEAYSDMWGMMERTEGVFRYIAEKLNVQKLNFAGKEIDITKPFAKINMVDAVSEKIGVNVRELDDKKALELAKQHDIKVEKYFKLGHVIEALFEKYIEETLIQPTFVYGHPLDISPLAFKDESDPRFTQRAELFICTKEFANMYTELNDPFDQLQRFEAQLDEKNAGNEEANEIDWDFVKALEYGMPPTGGCGIGIERLIMFFTENDSIREVLLFPQLKAVSQK</sequence>
<keyword id="KW-0030">Aminoacyl-tRNA synthetase</keyword>
<keyword id="KW-0067">ATP-binding</keyword>
<keyword id="KW-0963">Cytoplasm</keyword>
<keyword id="KW-0436">Ligase</keyword>
<keyword id="KW-0460">Magnesium</keyword>
<keyword id="KW-0479">Metal-binding</keyword>
<keyword id="KW-0547">Nucleotide-binding</keyword>
<keyword id="KW-0648">Protein biosynthesis</keyword>
<keyword id="KW-1185">Reference proteome</keyword>
<proteinExistence type="inferred from homology"/>